<feature type="chain" id="PRO_0000132676" description="Small ribosomal subunit protein uS4c">
    <location>
        <begin position="1"/>
        <end position="196" status="greater than"/>
    </location>
</feature>
<feature type="domain" description="S4 RNA-binding">
    <location>
        <begin position="89"/>
        <end position="150"/>
    </location>
</feature>
<feature type="region of interest" description="Disordered" evidence="2">
    <location>
        <begin position="15"/>
        <end position="43"/>
    </location>
</feature>
<feature type="non-terminal residue">
    <location>
        <position position="196"/>
    </location>
</feature>
<dbReference type="EMBL" id="Z29253">
    <property type="protein sequence ID" value="CAA82452.1"/>
    <property type="molecule type" value="Genomic_DNA"/>
</dbReference>
<dbReference type="PIR" id="S41282">
    <property type="entry name" value="S41282"/>
</dbReference>
<dbReference type="SMR" id="P69653"/>
<dbReference type="GO" id="GO:0009507">
    <property type="term" value="C:chloroplast"/>
    <property type="evidence" value="ECO:0007669"/>
    <property type="project" value="UniProtKB-SubCell"/>
</dbReference>
<dbReference type="GO" id="GO:0015935">
    <property type="term" value="C:small ribosomal subunit"/>
    <property type="evidence" value="ECO:0007669"/>
    <property type="project" value="InterPro"/>
</dbReference>
<dbReference type="GO" id="GO:0019843">
    <property type="term" value="F:rRNA binding"/>
    <property type="evidence" value="ECO:0007669"/>
    <property type="project" value="UniProtKB-KW"/>
</dbReference>
<dbReference type="GO" id="GO:0003735">
    <property type="term" value="F:structural constituent of ribosome"/>
    <property type="evidence" value="ECO:0007669"/>
    <property type="project" value="InterPro"/>
</dbReference>
<dbReference type="GO" id="GO:0042274">
    <property type="term" value="P:ribosomal small subunit biogenesis"/>
    <property type="evidence" value="ECO:0007669"/>
    <property type="project" value="TreeGrafter"/>
</dbReference>
<dbReference type="GO" id="GO:0006412">
    <property type="term" value="P:translation"/>
    <property type="evidence" value="ECO:0007669"/>
    <property type="project" value="InterPro"/>
</dbReference>
<dbReference type="CDD" id="cd00165">
    <property type="entry name" value="S4"/>
    <property type="match status" value="1"/>
</dbReference>
<dbReference type="FunFam" id="1.10.1050.10:FF:000002">
    <property type="entry name" value="30S ribosomal protein S4, chloroplastic"/>
    <property type="match status" value="1"/>
</dbReference>
<dbReference type="FunFam" id="3.10.290.10:FF:000081">
    <property type="entry name" value="30S ribosomal protein S4, chloroplastic"/>
    <property type="match status" value="1"/>
</dbReference>
<dbReference type="Gene3D" id="1.10.1050.10">
    <property type="entry name" value="Ribosomal Protein S4 Delta 41, Chain A, domain 1"/>
    <property type="match status" value="1"/>
</dbReference>
<dbReference type="Gene3D" id="3.10.290.10">
    <property type="entry name" value="RNA-binding S4 domain"/>
    <property type="match status" value="1"/>
</dbReference>
<dbReference type="HAMAP" id="MF_01306_B">
    <property type="entry name" value="Ribosomal_uS4_B"/>
    <property type="match status" value="1"/>
</dbReference>
<dbReference type="InterPro" id="IPR022801">
    <property type="entry name" value="Ribosomal_uS4"/>
</dbReference>
<dbReference type="InterPro" id="IPR005709">
    <property type="entry name" value="Ribosomal_uS4_bac-type"/>
</dbReference>
<dbReference type="InterPro" id="IPR018079">
    <property type="entry name" value="Ribosomal_uS4_CS"/>
</dbReference>
<dbReference type="InterPro" id="IPR001912">
    <property type="entry name" value="Ribosomal_uS4_N"/>
</dbReference>
<dbReference type="InterPro" id="IPR002942">
    <property type="entry name" value="S4_RNA-bd"/>
</dbReference>
<dbReference type="InterPro" id="IPR036986">
    <property type="entry name" value="S4_RNA-bd_sf"/>
</dbReference>
<dbReference type="NCBIfam" id="NF003717">
    <property type="entry name" value="PRK05327.1"/>
    <property type="match status" value="1"/>
</dbReference>
<dbReference type="NCBIfam" id="TIGR01017">
    <property type="entry name" value="rpsD_bact"/>
    <property type="match status" value="1"/>
</dbReference>
<dbReference type="PANTHER" id="PTHR11831">
    <property type="entry name" value="30S 40S RIBOSOMAL PROTEIN"/>
    <property type="match status" value="1"/>
</dbReference>
<dbReference type="PANTHER" id="PTHR11831:SF4">
    <property type="entry name" value="SMALL RIBOSOMAL SUBUNIT PROTEIN US4M"/>
    <property type="match status" value="1"/>
</dbReference>
<dbReference type="Pfam" id="PF00163">
    <property type="entry name" value="Ribosomal_S4"/>
    <property type="match status" value="1"/>
</dbReference>
<dbReference type="Pfam" id="PF01479">
    <property type="entry name" value="S4"/>
    <property type="match status" value="1"/>
</dbReference>
<dbReference type="SMART" id="SM01390">
    <property type="entry name" value="Ribosomal_S4"/>
    <property type="match status" value="1"/>
</dbReference>
<dbReference type="SMART" id="SM00363">
    <property type="entry name" value="S4"/>
    <property type="match status" value="1"/>
</dbReference>
<dbReference type="SUPFAM" id="SSF55174">
    <property type="entry name" value="Alpha-L RNA-binding motif"/>
    <property type="match status" value="1"/>
</dbReference>
<dbReference type="PROSITE" id="PS00632">
    <property type="entry name" value="RIBOSOMAL_S4"/>
    <property type="match status" value="1"/>
</dbReference>
<dbReference type="PROSITE" id="PS50889">
    <property type="entry name" value="S4"/>
    <property type="match status" value="1"/>
</dbReference>
<comment type="function">
    <text evidence="1">One of the primary rRNA binding proteins, it binds directly to 16S rRNA where it nucleates assembly of the body of the 30S subunit.</text>
</comment>
<comment type="function">
    <text evidence="1">With S5 and S12 plays an important role in translational accuracy.</text>
</comment>
<comment type="subunit">
    <text evidence="1">Part of the 30S ribosomal subunit. Contacts protein S5. The interaction surface between S4 and S5 is involved in control of translational fidelity (By similarity).</text>
</comment>
<comment type="subcellular location">
    <subcellularLocation>
        <location>Plastid</location>
        <location>Chloroplast</location>
    </subcellularLocation>
</comment>
<comment type="similarity">
    <text evidence="3">Belongs to the universal ribosomal protein uS4 family.</text>
</comment>
<accession>P69653</accession>
<accession>P36446</accession>
<accession>P36474</accession>
<sequence length="196" mass="22827">MSRYRGPRLKKIRRLGALPGLTRKTPKSGSNQKKKFHSGKKEQYRIRLQEKQKLRFHYGLTERQLLRYVHIAGKAKRSTGQVLLQLLEMRLDNILFRLGMASTIPGARQLVNHRHILVNGRIVDIPSFRCKPRDIITTKDNQRSKRLVQNYIASSDPGKLPKHLTVDTLQYKGLVKKILDRKWVGLKINELLVVEY</sequence>
<organism>
    <name type="scientific">Tripsacum dactyloides</name>
    <name type="common">Gama grass</name>
    <name type="synonym">Coix dactyloides</name>
    <dbReference type="NCBI Taxonomy" id="4563"/>
    <lineage>
        <taxon>Eukaryota</taxon>
        <taxon>Viridiplantae</taxon>
        <taxon>Streptophyta</taxon>
        <taxon>Embryophyta</taxon>
        <taxon>Tracheophyta</taxon>
        <taxon>Spermatophyta</taxon>
        <taxon>Magnoliopsida</taxon>
        <taxon>Liliopsida</taxon>
        <taxon>Poales</taxon>
        <taxon>Poaceae</taxon>
        <taxon>PACMAD clade</taxon>
        <taxon>Panicoideae</taxon>
        <taxon>Andropogonodae</taxon>
        <taxon>Andropogoneae</taxon>
        <taxon>Tripsacinae</taxon>
        <taxon>Tripsacum</taxon>
    </lineage>
</organism>
<protein>
    <recommendedName>
        <fullName evidence="3">Small ribosomal subunit protein uS4c</fullName>
    </recommendedName>
    <alternativeName>
        <fullName>30S ribosomal protein S4, chloroplastic</fullName>
    </alternativeName>
</protein>
<keyword id="KW-0150">Chloroplast</keyword>
<keyword id="KW-0934">Plastid</keyword>
<keyword id="KW-0687">Ribonucleoprotein</keyword>
<keyword id="KW-0689">Ribosomal protein</keyword>
<keyword id="KW-0694">RNA-binding</keyword>
<keyword id="KW-0699">rRNA-binding</keyword>
<reference key="1">
    <citation type="journal article" date="1994" name="Plant Syst. Evol.">
        <title>The chloroplast gene rps4 as a tool for the study of Poaceae phylogeny.</title>
        <authorList>
            <person name="Nadot S."/>
            <person name="Bajon R."/>
            <person name="Lejeune B."/>
        </authorList>
        <dbReference type="AGRICOLA" id="IND20417698"/>
    </citation>
    <scope>NUCLEOTIDE SEQUENCE [GENOMIC DNA]</scope>
</reference>
<proteinExistence type="inferred from homology"/>
<gene>
    <name type="primary">rps4</name>
</gene>
<evidence type="ECO:0000250" key="1"/>
<evidence type="ECO:0000256" key="2">
    <source>
        <dbReference type="SAM" id="MobiDB-lite"/>
    </source>
</evidence>
<evidence type="ECO:0000305" key="3"/>
<geneLocation type="chloroplast"/>
<name>RR4_TRIDA</name>